<organism>
    <name type="scientific">Arabidopsis thaliana</name>
    <name type="common">Mouse-ear cress</name>
    <dbReference type="NCBI Taxonomy" id="3702"/>
    <lineage>
        <taxon>Eukaryota</taxon>
        <taxon>Viridiplantae</taxon>
        <taxon>Streptophyta</taxon>
        <taxon>Embryophyta</taxon>
        <taxon>Tracheophyta</taxon>
        <taxon>Spermatophyta</taxon>
        <taxon>Magnoliopsida</taxon>
        <taxon>eudicotyledons</taxon>
        <taxon>Gunneridae</taxon>
        <taxon>Pentapetalae</taxon>
        <taxon>rosids</taxon>
        <taxon>malvids</taxon>
        <taxon>Brassicales</taxon>
        <taxon>Brassicaceae</taxon>
        <taxon>Camelineae</taxon>
        <taxon>Arabidopsis</taxon>
    </lineage>
</organism>
<evidence type="ECO:0000255" key="1">
    <source>
        <dbReference type="PROSITE-ProRule" id="PRU00080"/>
    </source>
</evidence>
<keyword id="KW-0433">Leucine-rich repeat</keyword>
<keyword id="KW-1185">Reference proteome</keyword>
<keyword id="KW-0677">Repeat</keyword>
<protein>
    <recommendedName>
        <fullName>Putative F-box/LRR-repeat protein At3g58880</fullName>
    </recommendedName>
</protein>
<accession>Q9LXR4</accession>
<feature type="chain" id="PRO_0000281957" description="Putative F-box/LRR-repeat protein At3g58880">
    <location>
        <begin position="1"/>
        <end position="454"/>
    </location>
</feature>
<feature type="domain" description="F-box" evidence="1">
    <location>
        <begin position="2"/>
        <end position="48"/>
    </location>
</feature>
<feature type="repeat" description="LRR 1">
    <location>
        <begin position="77"/>
        <end position="102"/>
    </location>
</feature>
<feature type="repeat" description="LRR 2">
    <location>
        <begin position="144"/>
        <end position="168"/>
    </location>
</feature>
<feature type="repeat" description="LRR 3">
    <location>
        <begin position="169"/>
        <end position="194"/>
    </location>
</feature>
<feature type="repeat" description="LRR 4">
    <location>
        <begin position="214"/>
        <end position="240"/>
    </location>
</feature>
<feature type="repeat" description="LRR 5">
    <location>
        <begin position="270"/>
        <end position="301"/>
    </location>
</feature>
<feature type="repeat" description="LRR 6">
    <location>
        <begin position="303"/>
        <end position="327"/>
    </location>
</feature>
<feature type="repeat" description="LRR 7">
    <location>
        <begin position="328"/>
        <end position="353"/>
    </location>
</feature>
<reference key="1">
    <citation type="journal article" date="2000" name="Nature">
        <title>Sequence and analysis of chromosome 3 of the plant Arabidopsis thaliana.</title>
        <authorList>
            <person name="Salanoubat M."/>
            <person name="Lemcke K."/>
            <person name="Rieger M."/>
            <person name="Ansorge W."/>
            <person name="Unseld M."/>
            <person name="Fartmann B."/>
            <person name="Valle G."/>
            <person name="Bloecker H."/>
            <person name="Perez-Alonso M."/>
            <person name="Obermaier B."/>
            <person name="Delseny M."/>
            <person name="Boutry M."/>
            <person name="Grivell L.A."/>
            <person name="Mache R."/>
            <person name="Puigdomenech P."/>
            <person name="De Simone V."/>
            <person name="Choisne N."/>
            <person name="Artiguenave F."/>
            <person name="Robert C."/>
            <person name="Brottier P."/>
            <person name="Wincker P."/>
            <person name="Cattolico L."/>
            <person name="Weissenbach J."/>
            <person name="Saurin W."/>
            <person name="Quetier F."/>
            <person name="Schaefer M."/>
            <person name="Mueller-Auer S."/>
            <person name="Gabel C."/>
            <person name="Fuchs M."/>
            <person name="Benes V."/>
            <person name="Wurmbach E."/>
            <person name="Drzonek H."/>
            <person name="Erfle H."/>
            <person name="Jordan N."/>
            <person name="Bangert S."/>
            <person name="Wiedelmann R."/>
            <person name="Kranz H."/>
            <person name="Voss H."/>
            <person name="Holland R."/>
            <person name="Brandt P."/>
            <person name="Nyakatura G."/>
            <person name="Vezzi A."/>
            <person name="D'Angelo M."/>
            <person name="Pallavicini A."/>
            <person name="Toppo S."/>
            <person name="Simionati B."/>
            <person name="Conrad A."/>
            <person name="Hornischer K."/>
            <person name="Kauer G."/>
            <person name="Loehnert T.-H."/>
            <person name="Nordsiek G."/>
            <person name="Reichelt J."/>
            <person name="Scharfe M."/>
            <person name="Schoen O."/>
            <person name="Bargues M."/>
            <person name="Terol J."/>
            <person name="Climent J."/>
            <person name="Navarro P."/>
            <person name="Collado C."/>
            <person name="Perez-Perez A."/>
            <person name="Ottenwaelder B."/>
            <person name="Duchemin D."/>
            <person name="Cooke R."/>
            <person name="Laudie M."/>
            <person name="Berger-Llauro C."/>
            <person name="Purnelle B."/>
            <person name="Masuy D."/>
            <person name="de Haan M."/>
            <person name="Maarse A.C."/>
            <person name="Alcaraz J.-P."/>
            <person name="Cottet A."/>
            <person name="Casacuberta E."/>
            <person name="Monfort A."/>
            <person name="Argiriou A."/>
            <person name="Flores M."/>
            <person name="Liguori R."/>
            <person name="Vitale D."/>
            <person name="Mannhaupt G."/>
            <person name="Haase D."/>
            <person name="Schoof H."/>
            <person name="Rudd S."/>
            <person name="Zaccaria P."/>
            <person name="Mewes H.-W."/>
            <person name="Mayer K.F.X."/>
            <person name="Kaul S."/>
            <person name="Town C.D."/>
            <person name="Koo H.L."/>
            <person name="Tallon L.J."/>
            <person name="Jenkins J."/>
            <person name="Rooney T."/>
            <person name="Rizzo M."/>
            <person name="Walts A."/>
            <person name="Utterback T."/>
            <person name="Fujii C.Y."/>
            <person name="Shea T.P."/>
            <person name="Creasy T.H."/>
            <person name="Haas B."/>
            <person name="Maiti R."/>
            <person name="Wu D."/>
            <person name="Peterson J."/>
            <person name="Van Aken S."/>
            <person name="Pai G."/>
            <person name="Militscher J."/>
            <person name="Sellers P."/>
            <person name="Gill J.E."/>
            <person name="Feldblyum T.V."/>
            <person name="Preuss D."/>
            <person name="Lin X."/>
            <person name="Nierman W.C."/>
            <person name="Salzberg S.L."/>
            <person name="White O."/>
            <person name="Venter J.C."/>
            <person name="Fraser C.M."/>
            <person name="Kaneko T."/>
            <person name="Nakamura Y."/>
            <person name="Sato S."/>
            <person name="Kato T."/>
            <person name="Asamizu E."/>
            <person name="Sasamoto S."/>
            <person name="Kimura T."/>
            <person name="Idesawa K."/>
            <person name="Kawashima K."/>
            <person name="Kishida Y."/>
            <person name="Kiyokawa C."/>
            <person name="Kohara M."/>
            <person name="Matsumoto M."/>
            <person name="Matsuno A."/>
            <person name="Muraki A."/>
            <person name="Nakayama S."/>
            <person name="Nakazaki N."/>
            <person name="Shinpo S."/>
            <person name="Takeuchi C."/>
            <person name="Wada T."/>
            <person name="Watanabe A."/>
            <person name="Yamada M."/>
            <person name="Yasuda M."/>
            <person name="Tabata S."/>
        </authorList>
    </citation>
    <scope>NUCLEOTIDE SEQUENCE [LARGE SCALE GENOMIC DNA]</scope>
    <source>
        <strain>cv. Columbia</strain>
    </source>
</reference>
<reference key="2">
    <citation type="journal article" date="2017" name="Plant J.">
        <title>Araport11: a complete reannotation of the Arabidopsis thaliana reference genome.</title>
        <authorList>
            <person name="Cheng C.Y."/>
            <person name="Krishnakumar V."/>
            <person name="Chan A.P."/>
            <person name="Thibaud-Nissen F."/>
            <person name="Schobel S."/>
            <person name="Town C.D."/>
        </authorList>
    </citation>
    <scope>GENOME REANNOTATION</scope>
    <source>
        <strain>cv. Columbia</strain>
    </source>
</reference>
<dbReference type="EMBL" id="AL353032">
    <property type="protein sequence ID" value="CAB88305.1"/>
    <property type="molecule type" value="Genomic_DNA"/>
</dbReference>
<dbReference type="EMBL" id="CP002686">
    <property type="protein sequence ID" value="AEE79843.1"/>
    <property type="molecule type" value="Genomic_DNA"/>
</dbReference>
<dbReference type="PIR" id="T49171">
    <property type="entry name" value="T49171"/>
</dbReference>
<dbReference type="RefSeq" id="NP_191447.1">
    <property type="nucleotide sequence ID" value="NM_115750.1"/>
</dbReference>
<dbReference type="FunCoup" id="Q9LXR4">
    <property type="interactions" value="37"/>
</dbReference>
<dbReference type="PaxDb" id="3702-AT3G58880.1"/>
<dbReference type="EnsemblPlants" id="AT3G58880.1">
    <property type="protein sequence ID" value="AT3G58880.1"/>
    <property type="gene ID" value="AT3G58880"/>
</dbReference>
<dbReference type="GeneID" id="825057"/>
<dbReference type="Gramene" id="AT3G58880.1">
    <property type="protein sequence ID" value="AT3G58880.1"/>
    <property type="gene ID" value="AT3G58880"/>
</dbReference>
<dbReference type="KEGG" id="ath:AT3G58880"/>
<dbReference type="Araport" id="AT3G58880"/>
<dbReference type="TAIR" id="AT3G58880"/>
<dbReference type="HOGENOM" id="CLU_010721_7_1_1"/>
<dbReference type="InParanoid" id="Q9LXR4"/>
<dbReference type="OMA" id="VFGYPMK"/>
<dbReference type="PhylomeDB" id="Q9LXR4"/>
<dbReference type="PRO" id="PR:Q9LXR4"/>
<dbReference type="Proteomes" id="UP000006548">
    <property type="component" value="Chromosome 3"/>
</dbReference>
<dbReference type="ExpressionAtlas" id="Q9LXR4">
    <property type="expression patterns" value="baseline"/>
</dbReference>
<dbReference type="CDD" id="cd22160">
    <property type="entry name" value="F-box_AtFBL13-like"/>
    <property type="match status" value="1"/>
</dbReference>
<dbReference type="Gene3D" id="1.20.1280.50">
    <property type="match status" value="1"/>
</dbReference>
<dbReference type="Gene3D" id="3.80.10.10">
    <property type="entry name" value="Ribonuclease Inhibitor"/>
    <property type="match status" value="1"/>
</dbReference>
<dbReference type="InterPro" id="IPR036047">
    <property type="entry name" value="F-box-like_dom_sf"/>
</dbReference>
<dbReference type="InterPro" id="IPR053781">
    <property type="entry name" value="F-box_AtFBL13-like"/>
</dbReference>
<dbReference type="InterPro" id="IPR001810">
    <property type="entry name" value="F-box_dom"/>
</dbReference>
<dbReference type="InterPro" id="IPR006566">
    <property type="entry name" value="FBD"/>
</dbReference>
<dbReference type="InterPro" id="IPR055294">
    <property type="entry name" value="FBL60-like"/>
</dbReference>
<dbReference type="InterPro" id="IPR032675">
    <property type="entry name" value="LRR_dom_sf"/>
</dbReference>
<dbReference type="InterPro" id="IPR055411">
    <property type="entry name" value="LRR_FXL15/At3g58940/PEG3-like"/>
</dbReference>
<dbReference type="PANTHER" id="PTHR31293">
    <property type="entry name" value="RNI-LIKE SUPERFAMILY PROTEIN"/>
    <property type="match status" value="1"/>
</dbReference>
<dbReference type="PANTHER" id="PTHR31293:SF16">
    <property type="entry name" value="RNI-LIKE SUPERFAMILY PROTEIN"/>
    <property type="match status" value="1"/>
</dbReference>
<dbReference type="Pfam" id="PF00646">
    <property type="entry name" value="F-box"/>
    <property type="match status" value="1"/>
</dbReference>
<dbReference type="Pfam" id="PF24758">
    <property type="entry name" value="LRR_At5g56370"/>
    <property type="match status" value="1"/>
</dbReference>
<dbReference type="SMART" id="SM00579">
    <property type="entry name" value="FBD"/>
    <property type="match status" value="1"/>
</dbReference>
<dbReference type="SMART" id="SM00256">
    <property type="entry name" value="FBOX"/>
    <property type="match status" value="1"/>
</dbReference>
<dbReference type="SUPFAM" id="SSF81383">
    <property type="entry name" value="F-box domain"/>
    <property type="match status" value="1"/>
</dbReference>
<dbReference type="SUPFAM" id="SSF52047">
    <property type="entry name" value="RNI-like"/>
    <property type="match status" value="1"/>
</dbReference>
<dbReference type="PROSITE" id="PS50181">
    <property type="entry name" value="FBOX"/>
    <property type="match status" value="1"/>
</dbReference>
<sequence length="454" mass="50764">MVDLVSSLPDDLLGHILSLLTTKEAALTSILSKRWRYLIAFVPYLEFDDSAFLNPEEGKQTREGTRQSFIDFVDRVLALHGDSPIRKFSLKCKTGVDLDLLNQWICNVLQRGVLLIDLSMDLGHRCMFIEIFMSRTLVELKLGSGCRIAFGPEHISALPMLKTLTLDSVSWSDSGQLERLLSACPALEALNLANVHGSYPNATVSIASLKTLTIKSVSLSGPAHVFSFDTPNLLCLNYTALFEDDYPLVNLEYLVEAQIKFVLTDRLIKLVSVRKNGLLMLSEVQKLIRGISSVRKLYLSPGTLQVLGQCSQAMPVFNNLTFLVIESSMDIRWQAMPVLLKNCPRLETLVIKGGLVHCVAADCGDACTCISREEKGRSLASCPVKRLEIREFQGTLREMEMIKHFYYCFLCLKEMEIYVKDGRPQFLAPLASDSNPFKHLLGRNVIIKVHGSLT</sequence>
<proteinExistence type="predicted"/>
<name>FBL56_ARATH</name>
<gene>
    <name type="ordered locus">At3g58880</name>
    <name type="ORF">T20N10.230</name>
</gene>